<protein>
    <recommendedName>
        <fullName>Cytokine receptor-like factor 2</fullName>
    </recommendedName>
    <alternativeName>
        <fullName>Thymic stromal lymphopoietin protein receptor</fullName>
        <shortName>TSLP receptor</shortName>
    </alternativeName>
</protein>
<evidence type="ECO:0000250" key="1"/>
<evidence type="ECO:0000250" key="2">
    <source>
        <dbReference type="UniProtKB" id="Q8CII9"/>
    </source>
</evidence>
<evidence type="ECO:0000255" key="3"/>
<evidence type="ECO:0000255" key="4">
    <source>
        <dbReference type="PROSITE-ProRule" id="PRU00316"/>
    </source>
</evidence>
<evidence type="ECO:0000269" key="5">
    <source>
    </source>
</evidence>
<evidence type="ECO:0000305" key="6"/>
<sequence>MRAVTWAIVAMLLPRVLGAIPTRTPRTGGVGDTLSVAIVCHDLESVEVTWGPGSAHHGLSANLSLEFRYGNQVPQPCPHYFLLDSVRAGCVLPMGKGLLEVVLREGGGAKLFSRKKKASAWLRPRPPWNVTLSWVGDTVAVSCPSHSYPGLEYEVQHRDDFDPEWQSTSAPFCNLTVGGLDPGRCYDFRVRATPQDFYYGPEARPSKWTGVASLQGVGPTGSCTGPTLPRTPGTPTPPLALACGLAVALLTLVLLLALLRMRRVKEALLPGVPDPRGSFPGLFEKHHGNFQAWIADSQAAVPTVPEQDKDDDVIRPQTKGVETQEDDDVIAPGSPCLGGGALMSVGGASFLMGDSGYTTL</sequence>
<name>CRLF2_RAT</name>
<reference key="1">
    <citation type="journal article" date="2002" name="Gene">
        <title>Cloning of rat thymic stromal lymphopoietin receptor (TSLPR) and characterization of genomic structure of murine Tslpr gene.</title>
        <authorList>
            <person name="Blagoev B."/>
            <person name="Nielsen M.M."/>
            <person name="Angrist M."/>
            <person name="Chakravarti A."/>
            <person name="Pandey A."/>
        </authorList>
    </citation>
    <scope>NUCLEOTIDE SEQUENCE [MRNA]</scope>
    <scope>FUNCTION AS A RECEPTOR FOR TSLP</scope>
    <scope>TISSUE SPECIFICITY</scope>
    <source>
        <tissue>Brain</tissue>
        <tissue>Spleen</tissue>
    </source>
</reference>
<gene>
    <name type="primary">Crlf2</name>
    <name type="synonym">Tslpr</name>
</gene>
<proteinExistence type="evidence at protein level"/>
<dbReference type="EMBL" id="AF404510">
    <property type="protein sequence ID" value="AAL90454.1"/>
    <property type="molecule type" value="mRNA"/>
</dbReference>
<dbReference type="SMR" id="Q8R4S8"/>
<dbReference type="FunCoup" id="Q8R4S8">
    <property type="interactions" value="3"/>
</dbReference>
<dbReference type="STRING" id="10116.ENSRNOP00000066370"/>
<dbReference type="GlyCosmos" id="Q8R4S8">
    <property type="glycosylation" value="3 sites, No reported glycans"/>
</dbReference>
<dbReference type="GlyGen" id="Q8R4S8">
    <property type="glycosylation" value="5 sites"/>
</dbReference>
<dbReference type="iPTMnet" id="Q8R4S8"/>
<dbReference type="PhosphoSitePlus" id="Q8R4S8"/>
<dbReference type="PaxDb" id="10116-ENSRNOP00000066370"/>
<dbReference type="AGR" id="RGD:621078"/>
<dbReference type="RGD" id="621078">
    <property type="gene designation" value="Crlf2"/>
</dbReference>
<dbReference type="eggNOG" id="ENOG502RYG2">
    <property type="taxonomic scope" value="Eukaryota"/>
</dbReference>
<dbReference type="InParanoid" id="Q8R4S8"/>
<dbReference type="PhylomeDB" id="Q8R4S8"/>
<dbReference type="PRO" id="PR:Q8R4S8"/>
<dbReference type="Proteomes" id="UP000002494">
    <property type="component" value="Unplaced"/>
</dbReference>
<dbReference type="GO" id="GO:0009897">
    <property type="term" value="C:external side of plasma membrane"/>
    <property type="evidence" value="ECO:0000266"/>
    <property type="project" value="RGD"/>
</dbReference>
<dbReference type="GO" id="GO:0015026">
    <property type="term" value="F:coreceptor activity"/>
    <property type="evidence" value="ECO:0000266"/>
    <property type="project" value="RGD"/>
</dbReference>
<dbReference type="GO" id="GO:0005125">
    <property type="term" value="F:cytokine activity"/>
    <property type="evidence" value="ECO:0000314"/>
    <property type="project" value="RGD"/>
</dbReference>
<dbReference type="GO" id="GO:0004896">
    <property type="term" value="F:cytokine receptor activity"/>
    <property type="evidence" value="ECO:0000266"/>
    <property type="project" value="RGD"/>
</dbReference>
<dbReference type="GO" id="GO:0044877">
    <property type="term" value="F:protein-containing complex binding"/>
    <property type="evidence" value="ECO:0000304"/>
    <property type="project" value="RGD"/>
</dbReference>
<dbReference type="GO" id="GO:0019221">
    <property type="term" value="P:cytokine-mediated signaling pathway"/>
    <property type="evidence" value="ECO:0000266"/>
    <property type="project" value="RGD"/>
</dbReference>
<dbReference type="GO" id="GO:0006954">
    <property type="term" value="P:inflammatory response"/>
    <property type="evidence" value="ECO:0000266"/>
    <property type="project" value="RGD"/>
</dbReference>
<dbReference type="GO" id="GO:0008284">
    <property type="term" value="P:positive regulation of cell population proliferation"/>
    <property type="evidence" value="ECO:0000266"/>
    <property type="project" value="RGD"/>
</dbReference>
<dbReference type="GO" id="GO:0032754">
    <property type="term" value="P:positive regulation of interleukin-5 production"/>
    <property type="evidence" value="ECO:0000266"/>
    <property type="project" value="RGD"/>
</dbReference>
<dbReference type="GO" id="GO:0033005">
    <property type="term" value="P:positive regulation of mast cell activation"/>
    <property type="evidence" value="ECO:0000266"/>
    <property type="project" value="RGD"/>
</dbReference>
<dbReference type="GO" id="GO:1904894">
    <property type="term" value="P:positive regulation of receptor signaling pathway via STAT"/>
    <property type="evidence" value="ECO:0000266"/>
    <property type="project" value="RGD"/>
</dbReference>
<dbReference type="CDD" id="cd00063">
    <property type="entry name" value="FN3"/>
    <property type="match status" value="1"/>
</dbReference>
<dbReference type="FunFam" id="2.60.40.10:FF:001547">
    <property type="entry name" value="Cytokine receptor-like factor 2"/>
    <property type="match status" value="1"/>
</dbReference>
<dbReference type="Gene3D" id="2.60.40.10">
    <property type="entry name" value="Immunoglobulins"/>
    <property type="match status" value="2"/>
</dbReference>
<dbReference type="InterPro" id="IPR048648">
    <property type="entry name" value="CRLF2-like_D2"/>
</dbReference>
<dbReference type="InterPro" id="IPR003961">
    <property type="entry name" value="FN3_dom"/>
</dbReference>
<dbReference type="InterPro" id="IPR036116">
    <property type="entry name" value="FN3_sf"/>
</dbReference>
<dbReference type="InterPro" id="IPR013783">
    <property type="entry name" value="Ig-like_fold"/>
</dbReference>
<dbReference type="InterPro" id="IPR053856">
    <property type="entry name" value="TSLPR_D1"/>
</dbReference>
<dbReference type="PANTHER" id="PTHR23037">
    <property type="entry name" value="CYTOKINE RECEPTOR"/>
    <property type="match status" value="1"/>
</dbReference>
<dbReference type="PANTHER" id="PTHR23037:SF35">
    <property type="entry name" value="FIBRONECTIN TYPE-III DOMAIN-CONTAINING PROTEIN"/>
    <property type="match status" value="1"/>
</dbReference>
<dbReference type="Pfam" id="PF21605">
    <property type="entry name" value="CRLF2-like_D2"/>
    <property type="match status" value="1"/>
</dbReference>
<dbReference type="Pfam" id="PF22012">
    <property type="entry name" value="TSLPR_D1"/>
    <property type="match status" value="1"/>
</dbReference>
<dbReference type="SMART" id="SM00060">
    <property type="entry name" value="FN3"/>
    <property type="match status" value="1"/>
</dbReference>
<dbReference type="SUPFAM" id="SSF49265">
    <property type="entry name" value="Fibronectin type III"/>
    <property type="match status" value="2"/>
</dbReference>
<dbReference type="PROSITE" id="PS50853">
    <property type="entry name" value="FN3"/>
    <property type="match status" value="1"/>
</dbReference>
<organism>
    <name type="scientific">Rattus norvegicus</name>
    <name type="common">Rat</name>
    <dbReference type="NCBI Taxonomy" id="10116"/>
    <lineage>
        <taxon>Eukaryota</taxon>
        <taxon>Metazoa</taxon>
        <taxon>Chordata</taxon>
        <taxon>Craniata</taxon>
        <taxon>Vertebrata</taxon>
        <taxon>Euteleostomi</taxon>
        <taxon>Mammalia</taxon>
        <taxon>Eutheria</taxon>
        <taxon>Euarchontoglires</taxon>
        <taxon>Glires</taxon>
        <taxon>Rodentia</taxon>
        <taxon>Myomorpha</taxon>
        <taxon>Muroidea</taxon>
        <taxon>Muridae</taxon>
        <taxon>Murinae</taxon>
        <taxon>Rattus</taxon>
    </lineage>
</organism>
<feature type="signal peptide" evidence="3">
    <location>
        <begin position="1"/>
        <end position="18"/>
    </location>
</feature>
<feature type="chain" id="PRO_0000011043" description="Cytokine receptor-like factor 2">
    <location>
        <begin position="19"/>
        <end position="360"/>
    </location>
</feature>
<feature type="topological domain" description="Extracellular" evidence="3">
    <location>
        <begin position="27"/>
        <end position="238"/>
    </location>
</feature>
<feature type="transmembrane region" description="Helical" evidence="3">
    <location>
        <begin position="239"/>
        <end position="259"/>
    </location>
</feature>
<feature type="topological domain" description="Cytoplasmic" evidence="3">
    <location>
        <begin position="260"/>
        <end position="360"/>
    </location>
</feature>
<feature type="domain" description="Fibronectin type-III" evidence="4">
    <location>
        <begin position="123"/>
        <end position="214"/>
    </location>
</feature>
<feature type="short sequence motif" description="WSXWS motif">
    <location>
        <begin position="205"/>
        <end position="209"/>
    </location>
</feature>
<feature type="short sequence motif" description="Box 1 motif">
    <location>
        <begin position="268"/>
        <end position="276"/>
    </location>
</feature>
<feature type="glycosylation site" description="N-linked (GlcNAc...) asparagine" evidence="3">
    <location>
        <position position="62"/>
    </location>
</feature>
<feature type="glycosylation site" description="N-linked (GlcNAc...) asparagine" evidence="3">
    <location>
        <position position="129"/>
    </location>
</feature>
<feature type="glycosylation site" description="N-linked (GlcNAc...) asparagine" evidence="3">
    <location>
        <position position="174"/>
    </location>
</feature>
<feature type="disulfide bond" evidence="2">
    <location>
        <begin position="77"/>
        <end position="90"/>
    </location>
</feature>
<feature type="disulfide bond" evidence="2">
    <location>
        <begin position="185"/>
        <end position="223"/>
    </location>
</feature>
<comment type="function">
    <text evidence="1 5">Receptor for thymic stromal lymphopoietin (TSLP). Forms a functional complex with TSLP and IL7R which is capable of stimulating cell proliferation through activation of STAT3 and STAT5 (By similarity). Also activates JAK2 (By similarity). Implicated in the development of the hematopoietic system.</text>
</comment>
<comment type="subunit">
    <text>Heterodimer of CRLF2 and IL7R.</text>
</comment>
<comment type="subcellular location">
    <subcellularLocation>
        <location evidence="6">Membrane</location>
        <topology evidence="6">Single-pass type I membrane protein</topology>
    </subcellularLocation>
</comment>
<comment type="tissue specificity">
    <text evidence="5">Expressed in all tissues examined including brain, thymus, lung, heart, muscle, stomach, small intestine, liver, kidney, spleen, testis and skin. Highest levels in thymus, liver and testis.</text>
</comment>
<comment type="domain">
    <text>The WSXWS motif appears to be necessary for proper protein folding and thereby efficient intracellular transport and cell-surface receptor binding.</text>
</comment>
<comment type="domain">
    <text>The box 1 motif is required for JAK interaction and/or activation.</text>
</comment>
<comment type="similarity">
    <text evidence="6">Belongs to the type I cytokine receptor family. Type 5 subfamily.</text>
</comment>
<keyword id="KW-1015">Disulfide bond</keyword>
<keyword id="KW-0325">Glycoprotein</keyword>
<keyword id="KW-0472">Membrane</keyword>
<keyword id="KW-0675">Receptor</keyword>
<keyword id="KW-1185">Reference proteome</keyword>
<keyword id="KW-0732">Signal</keyword>
<keyword id="KW-0812">Transmembrane</keyword>
<keyword id="KW-1133">Transmembrane helix</keyword>
<accession>Q8R4S8</accession>